<gene>
    <name type="primary">alr</name>
    <name type="ordered locus">SE_1674</name>
</gene>
<evidence type="ECO:0000255" key="1">
    <source>
        <dbReference type="HAMAP-Rule" id="MF_01201"/>
    </source>
</evidence>
<proteinExistence type="inferred from homology"/>
<reference key="1">
    <citation type="journal article" date="2003" name="Mol. Microbiol.">
        <title>Genome-based analysis of virulence genes in a non-biofilm-forming Staphylococcus epidermidis strain (ATCC 12228).</title>
        <authorList>
            <person name="Zhang Y.-Q."/>
            <person name="Ren S.-X."/>
            <person name="Li H.-L."/>
            <person name="Wang Y.-X."/>
            <person name="Fu G."/>
            <person name="Yang J."/>
            <person name="Qin Z.-Q."/>
            <person name="Miao Y.-G."/>
            <person name="Wang W.-Y."/>
            <person name="Chen R.-S."/>
            <person name="Shen Y."/>
            <person name="Chen Z."/>
            <person name="Yuan Z.-H."/>
            <person name="Zhao G.-P."/>
            <person name="Qu D."/>
            <person name="Danchin A."/>
            <person name="Wen Y.-M."/>
        </authorList>
    </citation>
    <scope>NUCLEOTIDE SEQUENCE [LARGE SCALE GENOMIC DNA]</scope>
    <source>
        <strain>ATCC 12228 / FDA PCI 1200</strain>
    </source>
</reference>
<comment type="function">
    <text evidence="1">Catalyzes the interconversion of L-alanine and D-alanine. May also act on other amino acids.</text>
</comment>
<comment type="catalytic activity">
    <reaction evidence="1">
        <text>L-alanine = D-alanine</text>
        <dbReference type="Rhea" id="RHEA:20249"/>
        <dbReference type="ChEBI" id="CHEBI:57416"/>
        <dbReference type="ChEBI" id="CHEBI:57972"/>
        <dbReference type="EC" id="5.1.1.1"/>
    </reaction>
</comment>
<comment type="cofactor">
    <cofactor evidence="1">
        <name>pyridoxal 5'-phosphate</name>
        <dbReference type="ChEBI" id="CHEBI:597326"/>
    </cofactor>
</comment>
<comment type="pathway">
    <text evidence="1">Amino-acid biosynthesis; D-alanine biosynthesis; D-alanine from L-alanine: step 1/1.</text>
</comment>
<comment type="similarity">
    <text evidence="1">Belongs to the alanine racemase family.</text>
</comment>
<dbReference type="EC" id="5.1.1.1" evidence="1"/>
<dbReference type="EMBL" id="AE015929">
    <property type="protein sequence ID" value="AAO05273.1"/>
    <property type="molecule type" value="Genomic_DNA"/>
</dbReference>
<dbReference type="RefSeq" id="NP_765229.1">
    <property type="nucleotide sequence ID" value="NC_004461.1"/>
</dbReference>
<dbReference type="RefSeq" id="WP_002457107.1">
    <property type="nucleotide sequence ID" value="NZ_WBME01000071.1"/>
</dbReference>
<dbReference type="SMR" id="Q8CNK7"/>
<dbReference type="GeneID" id="50018225"/>
<dbReference type="KEGG" id="sep:SE_1674"/>
<dbReference type="PATRIC" id="fig|176280.10.peg.1635"/>
<dbReference type="eggNOG" id="COG0787">
    <property type="taxonomic scope" value="Bacteria"/>
</dbReference>
<dbReference type="HOGENOM" id="CLU_028393_2_1_9"/>
<dbReference type="OrthoDB" id="9813814at2"/>
<dbReference type="UniPathway" id="UPA00042">
    <property type="reaction ID" value="UER00497"/>
</dbReference>
<dbReference type="Proteomes" id="UP000001411">
    <property type="component" value="Chromosome"/>
</dbReference>
<dbReference type="GO" id="GO:0005829">
    <property type="term" value="C:cytosol"/>
    <property type="evidence" value="ECO:0007669"/>
    <property type="project" value="TreeGrafter"/>
</dbReference>
<dbReference type="GO" id="GO:0008784">
    <property type="term" value="F:alanine racemase activity"/>
    <property type="evidence" value="ECO:0007669"/>
    <property type="project" value="UniProtKB-UniRule"/>
</dbReference>
<dbReference type="GO" id="GO:0030170">
    <property type="term" value="F:pyridoxal phosphate binding"/>
    <property type="evidence" value="ECO:0007669"/>
    <property type="project" value="UniProtKB-UniRule"/>
</dbReference>
<dbReference type="GO" id="GO:0030632">
    <property type="term" value="P:D-alanine biosynthetic process"/>
    <property type="evidence" value="ECO:0007669"/>
    <property type="project" value="UniProtKB-UniRule"/>
</dbReference>
<dbReference type="GO" id="GO:0009252">
    <property type="term" value="P:peptidoglycan biosynthetic process"/>
    <property type="evidence" value="ECO:0007669"/>
    <property type="project" value="TreeGrafter"/>
</dbReference>
<dbReference type="CDD" id="cd00430">
    <property type="entry name" value="PLPDE_III_AR"/>
    <property type="match status" value="1"/>
</dbReference>
<dbReference type="FunFam" id="2.40.37.10:FF:000006">
    <property type="entry name" value="Alanine racemase"/>
    <property type="match status" value="1"/>
</dbReference>
<dbReference type="FunFam" id="3.20.20.10:FF:000002">
    <property type="entry name" value="Alanine racemase"/>
    <property type="match status" value="1"/>
</dbReference>
<dbReference type="Gene3D" id="3.20.20.10">
    <property type="entry name" value="Alanine racemase"/>
    <property type="match status" value="1"/>
</dbReference>
<dbReference type="Gene3D" id="2.40.37.10">
    <property type="entry name" value="Lyase, Ornithine Decarboxylase, Chain A, domain 1"/>
    <property type="match status" value="1"/>
</dbReference>
<dbReference type="HAMAP" id="MF_01201">
    <property type="entry name" value="Ala_racemase"/>
    <property type="match status" value="1"/>
</dbReference>
<dbReference type="InterPro" id="IPR000821">
    <property type="entry name" value="Ala_racemase"/>
</dbReference>
<dbReference type="InterPro" id="IPR009006">
    <property type="entry name" value="Ala_racemase/Decarboxylase_C"/>
</dbReference>
<dbReference type="InterPro" id="IPR011079">
    <property type="entry name" value="Ala_racemase_C"/>
</dbReference>
<dbReference type="InterPro" id="IPR001608">
    <property type="entry name" value="Ala_racemase_N"/>
</dbReference>
<dbReference type="InterPro" id="IPR020622">
    <property type="entry name" value="Ala_racemase_pyridoxalP-BS"/>
</dbReference>
<dbReference type="InterPro" id="IPR029066">
    <property type="entry name" value="PLP-binding_barrel"/>
</dbReference>
<dbReference type="NCBIfam" id="TIGR00492">
    <property type="entry name" value="alr"/>
    <property type="match status" value="1"/>
</dbReference>
<dbReference type="PANTHER" id="PTHR30511">
    <property type="entry name" value="ALANINE RACEMASE"/>
    <property type="match status" value="1"/>
</dbReference>
<dbReference type="PANTHER" id="PTHR30511:SF0">
    <property type="entry name" value="ALANINE RACEMASE, CATABOLIC-RELATED"/>
    <property type="match status" value="1"/>
</dbReference>
<dbReference type="Pfam" id="PF00842">
    <property type="entry name" value="Ala_racemase_C"/>
    <property type="match status" value="1"/>
</dbReference>
<dbReference type="Pfam" id="PF01168">
    <property type="entry name" value="Ala_racemase_N"/>
    <property type="match status" value="1"/>
</dbReference>
<dbReference type="PRINTS" id="PR00992">
    <property type="entry name" value="ALARACEMASE"/>
</dbReference>
<dbReference type="SMART" id="SM01005">
    <property type="entry name" value="Ala_racemase_C"/>
    <property type="match status" value="1"/>
</dbReference>
<dbReference type="SUPFAM" id="SSF50621">
    <property type="entry name" value="Alanine racemase C-terminal domain-like"/>
    <property type="match status" value="1"/>
</dbReference>
<dbReference type="SUPFAM" id="SSF51419">
    <property type="entry name" value="PLP-binding barrel"/>
    <property type="match status" value="1"/>
</dbReference>
<dbReference type="PROSITE" id="PS00395">
    <property type="entry name" value="ALANINE_RACEMASE"/>
    <property type="match status" value="1"/>
</dbReference>
<keyword id="KW-0413">Isomerase</keyword>
<keyword id="KW-0663">Pyridoxal phosphate</keyword>
<sequence length="382" mass="42955">MSEKFYRATYLNVNLDAILANYQNFNQLHANKTVISVIKANGYGLGSVKIAQHLMRHGATFFAVATLDEAIELRMHGVDAKLLVLGVVPTEDIEKAIQHRVALTVPSKAWLKETIKQIPDDNQKNLWLHVKLDTGMGRIGMKDIDEYKEVVDLINKRDHLVFEGVFTHFASADEPGSSMNEQYTLFKEMVNQVEKPIYIHCQNSAGSLLMDGQFCNAIRLGISLYGYYPSEYVKDNVKVHLRPSAQLVSETVQVKTLKVGETVSYGRTFIADEEMTIAILPIGYADGYLRSMQGAFVNVNGSQCEVIGRICMDQMIVKVPSHVKTGEKVILMDNHVDSPQSAEAVANKQGTINYEVLCNLSRRLPRIYYYDNNEEVTNELLK</sequence>
<protein>
    <recommendedName>
        <fullName evidence="1">Alanine racemase</fullName>
        <ecNumber evidence="1">5.1.1.1</ecNumber>
    </recommendedName>
</protein>
<name>ALR_STAES</name>
<organism>
    <name type="scientific">Staphylococcus epidermidis (strain ATCC 12228 / FDA PCI 1200)</name>
    <dbReference type="NCBI Taxonomy" id="176280"/>
    <lineage>
        <taxon>Bacteria</taxon>
        <taxon>Bacillati</taxon>
        <taxon>Bacillota</taxon>
        <taxon>Bacilli</taxon>
        <taxon>Bacillales</taxon>
        <taxon>Staphylococcaceae</taxon>
        <taxon>Staphylococcus</taxon>
    </lineage>
</organism>
<accession>Q8CNK7</accession>
<feature type="chain" id="PRO_0000114574" description="Alanine racemase">
    <location>
        <begin position="1"/>
        <end position="382"/>
    </location>
</feature>
<feature type="active site" description="Proton acceptor; specific for D-alanine" evidence="1">
    <location>
        <position position="39"/>
    </location>
</feature>
<feature type="active site" description="Proton acceptor; specific for L-alanine" evidence="1">
    <location>
        <position position="265"/>
    </location>
</feature>
<feature type="binding site" evidence="1">
    <location>
        <position position="138"/>
    </location>
    <ligand>
        <name>substrate</name>
    </ligand>
</feature>
<feature type="binding site" evidence="1">
    <location>
        <position position="312"/>
    </location>
    <ligand>
        <name>substrate</name>
    </ligand>
</feature>
<feature type="modified residue" description="N6-(pyridoxal phosphate)lysine" evidence="1">
    <location>
        <position position="39"/>
    </location>
</feature>